<organism>
    <name type="scientific">Colwellia psychrerythraea (strain 34H / ATCC BAA-681)</name>
    <name type="common">Vibrio psychroerythus</name>
    <dbReference type="NCBI Taxonomy" id="167879"/>
    <lineage>
        <taxon>Bacteria</taxon>
        <taxon>Pseudomonadati</taxon>
        <taxon>Pseudomonadota</taxon>
        <taxon>Gammaproteobacteria</taxon>
        <taxon>Alteromonadales</taxon>
        <taxon>Colwelliaceae</taxon>
        <taxon>Colwellia</taxon>
    </lineage>
</organism>
<evidence type="ECO:0000255" key="1">
    <source>
        <dbReference type="HAMAP-Rule" id="MF_00191"/>
    </source>
</evidence>
<reference key="1">
    <citation type="journal article" date="2005" name="Proc. Natl. Acad. Sci. U.S.A.">
        <title>The psychrophilic lifestyle as revealed by the genome sequence of Colwellia psychrerythraea 34H through genomic and proteomic analyses.</title>
        <authorList>
            <person name="Methe B.A."/>
            <person name="Nelson K.E."/>
            <person name="Deming J.W."/>
            <person name="Momen B."/>
            <person name="Melamud E."/>
            <person name="Zhang X."/>
            <person name="Moult J."/>
            <person name="Madupu R."/>
            <person name="Nelson W.C."/>
            <person name="Dodson R.J."/>
            <person name="Brinkac L.M."/>
            <person name="Daugherty S.C."/>
            <person name="Durkin A.S."/>
            <person name="DeBoy R.T."/>
            <person name="Kolonay J.F."/>
            <person name="Sullivan S.A."/>
            <person name="Zhou L."/>
            <person name="Davidsen T.M."/>
            <person name="Wu M."/>
            <person name="Huston A.L."/>
            <person name="Lewis M."/>
            <person name="Weaver B."/>
            <person name="Weidman J.F."/>
            <person name="Khouri H."/>
            <person name="Utterback T.R."/>
            <person name="Feldblyum T.V."/>
            <person name="Fraser C.M."/>
        </authorList>
    </citation>
    <scope>NUCLEOTIDE SEQUENCE [LARGE SCALE GENOMIC DNA]</scope>
    <source>
        <strain>34H / ATCC BAA-681</strain>
    </source>
</reference>
<keyword id="KW-0004">4Fe-4S</keyword>
<keyword id="KW-0408">Iron</keyword>
<keyword id="KW-0411">Iron-sulfur</keyword>
<keyword id="KW-0414">Isoprene biosynthesis</keyword>
<keyword id="KW-0479">Metal-binding</keyword>
<keyword id="KW-0560">Oxidoreductase</keyword>
<sequence>MEIILANPRGFCAGVDRAISIVERALDLFGAPIYVRHEVVHNKFVVDGLKDRGAIFVDELDEVPDDNTVIFSAHGVSKAVRQEAKTRALKVFDATCPLVTKVHMEVSRVSRKDIECILIGHAGHPEVEGTMGQYSSDSAGIYLVESPEDVASLVVKNPEKLYFCSQTTLSVDDTMDVIAALQAKFPLIEGPRKDDICYATQNRQDAVREIADKVDLMLVVGAKNSSNSNRLKELASKMGVTSYLIDTAENIETDWLTGVNKVGVTAGASAPAVLIKQVVEALKSYGGHQVIEHPGKEESIVFAVPAELR</sequence>
<accession>Q486R1</accession>
<gene>
    <name evidence="1" type="primary">ispH</name>
    <name type="ordered locus">CPS_1211</name>
</gene>
<protein>
    <recommendedName>
        <fullName evidence="1">4-hydroxy-3-methylbut-2-enyl diphosphate reductase</fullName>
        <shortName evidence="1">HMBPP reductase</shortName>
        <ecNumber evidence="1">1.17.7.4</ecNumber>
    </recommendedName>
</protein>
<comment type="function">
    <text evidence="1">Catalyzes the conversion of 1-hydroxy-2-methyl-2-(E)-butenyl 4-diphosphate (HMBPP) into a mixture of isopentenyl diphosphate (IPP) and dimethylallyl diphosphate (DMAPP). Acts in the terminal step of the DOXP/MEP pathway for isoprenoid precursor biosynthesis.</text>
</comment>
<comment type="catalytic activity">
    <reaction evidence="1">
        <text>isopentenyl diphosphate + 2 oxidized [2Fe-2S]-[ferredoxin] + H2O = (2E)-4-hydroxy-3-methylbut-2-enyl diphosphate + 2 reduced [2Fe-2S]-[ferredoxin] + 2 H(+)</text>
        <dbReference type="Rhea" id="RHEA:24488"/>
        <dbReference type="Rhea" id="RHEA-COMP:10000"/>
        <dbReference type="Rhea" id="RHEA-COMP:10001"/>
        <dbReference type="ChEBI" id="CHEBI:15377"/>
        <dbReference type="ChEBI" id="CHEBI:15378"/>
        <dbReference type="ChEBI" id="CHEBI:33737"/>
        <dbReference type="ChEBI" id="CHEBI:33738"/>
        <dbReference type="ChEBI" id="CHEBI:128753"/>
        <dbReference type="ChEBI" id="CHEBI:128769"/>
        <dbReference type="EC" id="1.17.7.4"/>
    </reaction>
</comment>
<comment type="catalytic activity">
    <reaction evidence="1">
        <text>dimethylallyl diphosphate + 2 oxidized [2Fe-2S]-[ferredoxin] + H2O = (2E)-4-hydroxy-3-methylbut-2-enyl diphosphate + 2 reduced [2Fe-2S]-[ferredoxin] + 2 H(+)</text>
        <dbReference type="Rhea" id="RHEA:24825"/>
        <dbReference type="Rhea" id="RHEA-COMP:10000"/>
        <dbReference type="Rhea" id="RHEA-COMP:10001"/>
        <dbReference type="ChEBI" id="CHEBI:15377"/>
        <dbReference type="ChEBI" id="CHEBI:15378"/>
        <dbReference type="ChEBI" id="CHEBI:33737"/>
        <dbReference type="ChEBI" id="CHEBI:33738"/>
        <dbReference type="ChEBI" id="CHEBI:57623"/>
        <dbReference type="ChEBI" id="CHEBI:128753"/>
        <dbReference type="EC" id="1.17.7.4"/>
    </reaction>
</comment>
<comment type="cofactor">
    <cofactor evidence="1">
        <name>[4Fe-4S] cluster</name>
        <dbReference type="ChEBI" id="CHEBI:49883"/>
    </cofactor>
    <text evidence="1">Binds 1 [4Fe-4S] cluster per subunit.</text>
</comment>
<comment type="pathway">
    <text evidence="1">Isoprenoid biosynthesis; dimethylallyl diphosphate biosynthesis; dimethylallyl diphosphate from (2E)-4-hydroxy-3-methylbutenyl diphosphate: step 1/1.</text>
</comment>
<comment type="pathway">
    <text evidence="1">Isoprenoid biosynthesis; isopentenyl diphosphate biosynthesis via DXP pathway; isopentenyl diphosphate from 1-deoxy-D-xylulose 5-phosphate: step 6/6.</text>
</comment>
<comment type="similarity">
    <text evidence="1">Belongs to the IspH family.</text>
</comment>
<proteinExistence type="inferred from homology"/>
<name>ISPH_COLP3</name>
<feature type="chain" id="PRO_1000021108" description="4-hydroxy-3-methylbut-2-enyl diphosphate reductase">
    <location>
        <begin position="1"/>
        <end position="309"/>
    </location>
</feature>
<feature type="active site" description="Proton donor" evidence="1">
    <location>
        <position position="126"/>
    </location>
</feature>
<feature type="binding site" evidence="1">
    <location>
        <position position="12"/>
    </location>
    <ligand>
        <name>[4Fe-4S] cluster</name>
        <dbReference type="ChEBI" id="CHEBI:49883"/>
    </ligand>
</feature>
<feature type="binding site" evidence="1">
    <location>
        <position position="41"/>
    </location>
    <ligand>
        <name>(2E)-4-hydroxy-3-methylbut-2-enyl diphosphate</name>
        <dbReference type="ChEBI" id="CHEBI:128753"/>
    </ligand>
</feature>
<feature type="binding site" evidence="1">
    <location>
        <position position="41"/>
    </location>
    <ligand>
        <name>dimethylallyl diphosphate</name>
        <dbReference type="ChEBI" id="CHEBI:57623"/>
    </ligand>
</feature>
<feature type="binding site" evidence="1">
    <location>
        <position position="41"/>
    </location>
    <ligand>
        <name>isopentenyl diphosphate</name>
        <dbReference type="ChEBI" id="CHEBI:128769"/>
    </ligand>
</feature>
<feature type="binding site" evidence="1">
    <location>
        <position position="74"/>
    </location>
    <ligand>
        <name>(2E)-4-hydroxy-3-methylbut-2-enyl diphosphate</name>
        <dbReference type="ChEBI" id="CHEBI:128753"/>
    </ligand>
</feature>
<feature type="binding site" evidence="1">
    <location>
        <position position="74"/>
    </location>
    <ligand>
        <name>dimethylallyl diphosphate</name>
        <dbReference type="ChEBI" id="CHEBI:57623"/>
    </ligand>
</feature>
<feature type="binding site" evidence="1">
    <location>
        <position position="74"/>
    </location>
    <ligand>
        <name>isopentenyl diphosphate</name>
        <dbReference type="ChEBI" id="CHEBI:128769"/>
    </ligand>
</feature>
<feature type="binding site" evidence="1">
    <location>
        <position position="96"/>
    </location>
    <ligand>
        <name>[4Fe-4S] cluster</name>
        <dbReference type="ChEBI" id="CHEBI:49883"/>
    </ligand>
</feature>
<feature type="binding site" evidence="1">
    <location>
        <position position="124"/>
    </location>
    <ligand>
        <name>(2E)-4-hydroxy-3-methylbut-2-enyl diphosphate</name>
        <dbReference type="ChEBI" id="CHEBI:128753"/>
    </ligand>
</feature>
<feature type="binding site" evidence="1">
    <location>
        <position position="124"/>
    </location>
    <ligand>
        <name>dimethylallyl diphosphate</name>
        <dbReference type="ChEBI" id="CHEBI:57623"/>
    </ligand>
</feature>
<feature type="binding site" evidence="1">
    <location>
        <position position="124"/>
    </location>
    <ligand>
        <name>isopentenyl diphosphate</name>
        <dbReference type="ChEBI" id="CHEBI:128769"/>
    </ligand>
</feature>
<feature type="binding site" evidence="1">
    <location>
        <position position="167"/>
    </location>
    <ligand>
        <name>(2E)-4-hydroxy-3-methylbut-2-enyl diphosphate</name>
        <dbReference type="ChEBI" id="CHEBI:128753"/>
    </ligand>
</feature>
<feature type="binding site" evidence="1">
    <location>
        <position position="197"/>
    </location>
    <ligand>
        <name>[4Fe-4S] cluster</name>
        <dbReference type="ChEBI" id="CHEBI:49883"/>
    </ligand>
</feature>
<feature type="binding site" evidence="1">
    <location>
        <position position="225"/>
    </location>
    <ligand>
        <name>(2E)-4-hydroxy-3-methylbut-2-enyl diphosphate</name>
        <dbReference type="ChEBI" id="CHEBI:128753"/>
    </ligand>
</feature>
<feature type="binding site" evidence="1">
    <location>
        <position position="225"/>
    </location>
    <ligand>
        <name>dimethylallyl diphosphate</name>
        <dbReference type="ChEBI" id="CHEBI:57623"/>
    </ligand>
</feature>
<feature type="binding site" evidence="1">
    <location>
        <position position="225"/>
    </location>
    <ligand>
        <name>isopentenyl diphosphate</name>
        <dbReference type="ChEBI" id="CHEBI:128769"/>
    </ligand>
</feature>
<feature type="binding site" evidence="1">
    <location>
        <position position="226"/>
    </location>
    <ligand>
        <name>(2E)-4-hydroxy-3-methylbut-2-enyl diphosphate</name>
        <dbReference type="ChEBI" id="CHEBI:128753"/>
    </ligand>
</feature>
<feature type="binding site" evidence="1">
    <location>
        <position position="226"/>
    </location>
    <ligand>
        <name>dimethylallyl diphosphate</name>
        <dbReference type="ChEBI" id="CHEBI:57623"/>
    </ligand>
</feature>
<feature type="binding site" evidence="1">
    <location>
        <position position="226"/>
    </location>
    <ligand>
        <name>isopentenyl diphosphate</name>
        <dbReference type="ChEBI" id="CHEBI:128769"/>
    </ligand>
</feature>
<feature type="binding site" evidence="1">
    <location>
        <position position="227"/>
    </location>
    <ligand>
        <name>(2E)-4-hydroxy-3-methylbut-2-enyl diphosphate</name>
        <dbReference type="ChEBI" id="CHEBI:128753"/>
    </ligand>
</feature>
<feature type="binding site" evidence="1">
    <location>
        <position position="227"/>
    </location>
    <ligand>
        <name>dimethylallyl diphosphate</name>
        <dbReference type="ChEBI" id="CHEBI:57623"/>
    </ligand>
</feature>
<feature type="binding site" evidence="1">
    <location>
        <position position="227"/>
    </location>
    <ligand>
        <name>isopentenyl diphosphate</name>
        <dbReference type="ChEBI" id="CHEBI:128769"/>
    </ligand>
</feature>
<feature type="binding site" evidence="1">
    <location>
        <position position="269"/>
    </location>
    <ligand>
        <name>(2E)-4-hydroxy-3-methylbut-2-enyl diphosphate</name>
        <dbReference type="ChEBI" id="CHEBI:128753"/>
    </ligand>
</feature>
<feature type="binding site" evidence="1">
    <location>
        <position position="269"/>
    </location>
    <ligand>
        <name>dimethylallyl diphosphate</name>
        <dbReference type="ChEBI" id="CHEBI:57623"/>
    </ligand>
</feature>
<feature type="binding site" evidence="1">
    <location>
        <position position="269"/>
    </location>
    <ligand>
        <name>isopentenyl diphosphate</name>
        <dbReference type="ChEBI" id="CHEBI:128769"/>
    </ligand>
</feature>
<dbReference type="EC" id="1.17.7.4" evidence="1"/>
<dbReference type="EMBL" id="CP000083">
    <property type="protein sequence ID" value="AAZ24157.1"/>
    <property type="molecule type" value="Genomic_DNA"/>
</dbReference>
<dbReference type="RefSeq" id="WP_011042048.1">
    <property type="nucleotide sequence ID" value="NC_003910.7"/>
</dbReference>
<dbReference type="SMR" id="Q486R1"/>
<dbReference type="STRING" id="167879.CPS_1211"/>
<dbReference type="KEGG" id="cps:CPS_1211"/>
<dbReference type="eggNOG" id="COG0761">
    <property type="taxonomic scope" value="Bacteria"/>
</dbReference>
<dbReference type="HOGENOM" id="CLU_027486_1_1_6"/>
<dbReference type="UniPathway" id="UPA00056">
    <property type="reaction ID" value="UER00097"/>
</dbReference>
<dbReference type="UniPathway" id="UPA00059">
    <property type="reaction ID" value="UER00105"/>
</dbReference>
<dbReference type="Proteomes" id="UP000000547">
    <property type="component" value="Chromosome"/>
</dbReference>
<dbReference type="GO" id="GO:0051539">
    <property type="term" value="F:4 iron, 4 sulfur cluster binding"/>
    <property type="evidence" value="ECO:0007669"/>
    <property type="project" value="UniProtKB-UniRule"/>
</dbReference>
<dbReference type="GO" id="GO:0051745">
    <property type="term" value="F:4-hydroxy-3-methylbut-2-enyl diphosphate reductase activity"/>
    <property type="evidence" value="ECO:0007669"/>
    <property type="project" value="UniProtKB-UniRule"/>
</dbReference>
<dbReference type="GO" id="GO:0046872">
    <property type="term" value="F:metal ion binding"/>
    <property type="evidence" value="ECO:0007669"/>
    <property type="project" value="UniProtKB-KW"/>
</dbReference>
<dbReference type="GO" id="GO:0050992">
    <property type="term" value="P:dimethylallyl diphosphate biosynthetic process"/>
    <property type="evidence" value="ECO:0007669"/>
    <property type="project" value="UniProtKB-UniRule"/>
</dbReference>
<dbReference type="GO" id="GO:0019288">
    <property type="term" value="P:isopentenyl diphosphate biosynthetic process, methylerythritol 4-phosphate pathway"/>
    <property type="evidence" value="ECO:0007669"/>
    <property type="project" value="UniProtKB-UniRule"/>
</dbReference>
<dbReference type="GO" id="GO:0016114">
    <property type="term" value="P:terpenoid biosynthetic process"/>
    <property type="evidence" value="ECO:0007669"/>
    <property type="project" value="UniProtKB-UniRule"/>
</dbReference>
<dbReference type="CDD" id="cd13944">
    <property type="entry name" value="lytB_ispH"/>
    <property type="match status" value="1"/>
</dbReference>
<dbReference type="Gene3D" id="3.40.50.11270">
    <property type="match status" value="1"/>
</dbReference>
<dbReference type="Gene3D" id="3.40.1010.20">
    <property type="entry name" value="4-hydroxy-3-methylbut-2-enyl diphosphate reductase, catalytic domain"/>
    <property type="match status" value="2"/>
</dbReference>
<dbReference type="HAMAP" id="MF_00191">
    <property type="entry name" value="IspH"/>
    <property type="match status" value="1"/>
</dbReference>
<dbReference type="InterPro" id="IPR003451">
    <property type="entry name" value="LytB/IspH"/>
</dbReference>
<dbReference type="NCBIfam" id="TIGR00216">
    <property type="entry name" value="ispH_lytB"/>
    <property type="match status" value="1"/>
</dbReference>
<dbReference type="NCBIfam" id="NF002188">
    <property type="entry name" value="PRK01045.1-2"/>
    <property type="match status" value="1"/>
</dbReference>
<dbReference type="NCBIfam" id="NF002190">
    <property type="entry name" value="PRK01045.1-4"/>
    <property type="match status" value="1"/>
</dbReference>
<dbReference type="PANTHER" id="PTHR30426">
    <property type="entry name" value="4-HYDROXY-3-METHYLBUT-2-ENYL DIPHOSPHATE REDUCTASE"/>
    <property type="match status" value="1"/>
</dbReference>
<dbReference type="PANTHER" id="PTHR30426:SF0">
    <property type="entry name" value="4-HYDROXY-3-METHYLBUT-2-ENYL DIPHOSPHATE REDUCTASE"/>
    <property type="match status" value="1"/>
</dbReference>
<dbReference type="Pfam" id="PF02401">
    <property type="entry name" value="LYTB"/>
    <property type="match status" value="1"/>
</dbReference>